<dbReference type="EMBL" id="AP006878">
    <property type="protein sequence ID" value="BAD84204.1"/>
    <property type="molecule type" value="Genomic_DNA"/>
</dbReference>
<dbReference type="RefSeq" id="WP_011248970.1">
    <property type="nucleotide sequence ID" value="NC_006624.1"/>
</dbReference>
<dbReference type="SMR" id="Q5JEB6"/>
<dbReference type="STRING" id="69014.TK0015"/>
<dbReference type="EnsemblBacteria" id="BAD84204">
    <property type="protein sequence ID" value="BAD84204"/>
    <property type="gene ID" value="TK0015"/>
</dbReference>
<dbReference type="GeneID" id="78446515"/>
<dbReference type="KEGG" id="tko:TK0015"/>
<dbReference type="PATRIC" id="fig|69014.16.peg.15"/>
<dbReference type="eggNOG" id="arCOG00219">
    <property type="taxonomic scope" value="Archaea"/>
</dbReference>
<dbReference type="HOGENOM" id="CLU_055936_0_0_2"/>
<dbReference type="InParanoid" id="Q5JEB6"/>
<dbReference type="OrthoDB" id="7820at2157"/>
<dbReference type="PhylomeDB" id="Q5JEB6"/>
<dbReference type="Proteomes" id="UP000000536">
    <property type="component" value="Chromosome"/>
</dbReference>
<dbReference type="GO" id="GO:0005886">
    <property type="term" value="C:plasma membrane"/>
    <property type="evidence" value="ECO:0007669"/>
    <property type="project" value="UniProtKB-SubCell"/>
</dbReference>
<dbReference type="GO" id="GO:0046872">
    <property type="term" value="F:metal ion binding"/>
    <property type="evidence" value="ECO:0007669"/>
    <property type="project" value="UniProtKB-KW"/>
</dbReference>
<dbReference type="GO" id="GO:0030973">
    <property type="term" value="F:molybdate ion binding"/>
    <property type="evidence" value="ECO:0000318"/>
    <property type="project" value="GO_Central"/>
</dbReference>
<dbReference type="GO" id="GO:1901359">
    <property type="term" value="F:tungstate binding"/>
    <property type="evidence" value="ECO:0007669"/>
    <property type="project" value="InterPro"/>
</dbReference>
<dbReference type="GO" id="GO:0015689">
    <property type="term" value="P:molybdate ion transport"/>
    <property type="evidence" value="ECO:0000318"/>
    <property type="project" value="GO_Central"/>
</dbReference>
<dbReference type="CDD" id="cd13540">
    <property type="entry name" value="PBP2_ModA_WtpA"/>
    <property type="match status" value="1"/>
</dbReference>
<dbReference type="FunFam" id="3.40.190.10:FF:000440">
    <property type="entry name" value="Uncharacterized solute-binding protein MA_0280"/>
    <property type="match status" value="1"/>
</dbReference>
<dbReference type="Gene3D" id="3.40.190.10">
    <property type="entry name" value="Periplasmic binding protein-like II"/>
    <property type="match status" value="2"/>
</dbReference>
<dbReference type="InterPro" id="IPR022498">
    <property type="entry name" value="ABC_trnspt_W-bd_WtpA"/>
</dbReference>
<dbReference type="InterPro" id="IPR050682">
    <property type="entry name" value="ModA/WtpA"/>
</dbReference>
<dbReference type="NCBIfam" id="NF003196">
    <property type="entry name" value="PRK04168.1"/>
    <property type="match status" value="1"/>
</dbReference>
<dbReference type="NCBIfam" id="TIGR03730">
    <property type="entry name" value="tungstate_WtpA"/>
    <property type="match status" value="1"/>
</dbReference>
<dbReference type="PANTHER" id="PTHR30632">
    <property type="entry name" value="MOLYBDATE-BINDING PERIPLASMIC PROTEIN"/>
    <property type="match status" value="1"/>
</dbReference>
<dbReference type="PANTHER" id="PTHR30632:SF16">
    <property type="entry name" value="MOLYBDATE_TUNGSTATE-BINDING PROTEIN WTPA"/>
    <property type="match status" value="1"/>
</dbReference>
<dbReference type="Pfam" id="PF13531">
    <property type="entry name" value="SBP_bac_11"/>
    <property type="match status" value="1"/>
</dbReference>
<dbReference type="SUPFAM" id="SSF53850">
    <property type="entry name" value="Periplasmic binding protein-like II"/>
    <property type="match status" value="1"/>
</dbReference>
<dbReference type="PROSITE" id="PS51257">
    <property type="entry name" value="PROKAR_LIPOPROTEIN"/>
    <property type="match status" value="1"/>
</dbReference>
<sequence>MRKVGLLLTAVLLLAVFSAGCISSSSENANTSEKETTLIVFHAGSLSIPFQGLENEFSAYAEKNLGLKVKFQDEASGSVMAVRKVTDLHRKADIVATADYTLIPQMLVPNYTDFYVLFATNEIVIAFTEESKYADEMKAHPEKWYEILARDDVSFGFSDPNQDPCGYRSVMVMKLADLYYGKPIFETLVEKNTNIYANGTHIYAPKEIQVKNNRIVIRPKETDLTGLVESGSLDYFFIYKSVAEQHNLSYITLPDEINLKDFSKADYYGQVEITLGSTGKTIKAKPIVYGVTVLKDAPNRELAIEFLKFLLGEEGKKVFMENHQDFLNPPVAFGNVPEEIKGLVEVRELTLGQP</sequence>
<gene>
    <name type="primary">wtpA</name>
    <name type="ordered locus">TK0015</name>
</gene>
<proteinExistence type="inferred from homology"/>
<reference key="1">
    <citation type="journal article" date="2005" name="Genome Res.">
        <title>Complete genome sequence of the hyperthermophilic archaeon Thermococcus kodakaraensis KOD1 and comparison with Pyrococcus genomes.</title>
        <authorList>
            <person name="Fukui T."/>
            <person name="Atomi H."/>
            <person name="Kanai T."/>
            <person name="Matsumi R."/>
            <person name="Fujiwara S."/>
            <person name="Imanaka T."/>
        </authorList>
    </citation>
    <scope>NUCLEOTIDE SEQUENCE [LARGE SCALE GENOMIC DNA]</scope>
    <source>
        <strain>ATCC BAA-918 / JCM 12380 / KOD1</strain>
    </source>
</reference>
<keyword id="KW-1003">Cell membrane</keyword>
<keyword id="KW-0472">Membrane</keyword>
<keyword id="KW-0479">Metal-binding</keyword>
<keyword id="KW-0500">Molybdenum</keyword>
<keyword id="KW-1185">Reference proteome</keyword>
<keyword id="KW-0732">Signal</keyword>
<keyword id="KW-0813">Transport</keyword>
<accession>Q5JEB6</accession>
<feature type="signal peptide" evidence="3">
    <location>
        <begin position="1"/>
        <end position="23"/>
    </location>
</feature>
<feature type="chain" id="PRO_0000159725" description="Molybdate/tungstate-binding protein WtpA">
    <location>
        <begin position="24"/>
        <end position="354"/>
    </location>
</feature>
<feature type="binding site" evidence="2">
    <location>
        <begin position="44"/>
        <end position="45"/>
    </location>
    <ligand>
        <name>molybdate</name>
        <dbReference type="ChEBI" id="CHEBI:36264"/>
    </ligand>
</feature>
<feature type="binding site" evidence="2">
    <location>
        <begin position="44"/>
        <end position="45"/>
    </location>
    <ligand>
        <name>tungstate</name>
        <dbReference type="ChEBI" id="CHEBI:46502"/>
    </ligand>
</feature>
<feature type="binding site" evidence="2">
    <location>
        <position position="78"/>
    </location>
    <ligand>
        <name>molybdate</name>
        <dbReference type="ChEBI" id="CHEBI:36264"/>
    </ligand>
</feature>
<feature type="binding site" evidence="2">
    <location>
        <position position="78"/>
    </location>
    <ligand>
        <name>tungstate</name>
        <dbReference type="ChEBI" id="CHEBI:46502"/>
    </ligand>
</feature>
<feature type="binding site" evidence="2">
    <location>
        <begin position="163"/>
        <end position="165"/>
    </location>
    <ligand>
        <name>molybdate</name>
        <dbReference type="ChEBI" id="CHEBI:36264"/>
    </ligand>
</feature>
<feature type="binding site" evidence="2">
    <location>
        <begin position="163"/>
        <end position="165"/>
    </location>
    <ligand>
        <name>tungstate</name>
        <dbReference type="ChEBI" id="CHEBI:46502"/>
    </ligand>
</feature>
<feature type="binding site" evidence="2">
    <location>
        <position position="221"/>
    </location>
    <ligand>
        <name>molybdate</name>
        <dbReference type="ChEBI" id="CHEBI:36264"/>
    </ligand>
</feature>
<feature type="binding site" evidence="2">
    <location>
        <position position="221"/>
    </location>
    <ligand>
        <name>tungstate</name>
        <dbReference type="ChEBI" id="CHEBI:46502"/>
    </ligand>
</feature>
<feature type="binding site" evidence="2">
    <location>
        <position position="239"/>
    </location>
    <ligand>
        <name>molybdate</name>
        <dbReference type="ChEBI" id="CHEBI:36264"/>
    </ligand>
</feature>
<feature type="binding site" evidence="2">
    <location>
        <position position="239"/>
    </location>
    <ligand>
        <name>tungstate</name>
        <dbReference type="ChEBI" id="CHEBI:46502"/>
    </ligand>
</feature>
<organism>
    <name type="scientific">Thermococcus kodakarensis (strain ATCC BAA-918 / JCM 12380 / KOD1)</name>
    <name type="common">Pyrococcus kodakaraensis (strain KOD1)</name>
    <dbReference type="NCBI Taxonomy" id="69014"/>
    <lineage>
        <taxon>Archaea</taxon>
        <taxon>Methanobacteriati</taxon>
        <taxon>Methanobacteriota</taxon>
        <taxon>Thermococci</taxon>
        <taxon>Thermococcales</taxon>
        <taxon>Thermococcaceae</taxon>
        <taxon>Thermococcus</taxon>
    </lineage>
</organism>
<name>WTPA_THEKO</name>
<evidence type="ECO:0000250" key="1"/>
<evidence type="ECO:0000250" key="2">
    <source>
        <dbReference type="UniProtKB" id="O30142"/>
    </source>
</evidence>
<evidence type="ECO:0000255" key="3">
    <source>
        <dbReference type="PROSITE-ProRule" id="PRU00303"/>
    </source>
</evidence>
<evidence type="ECO:0000305" key="4"/>
<protein>
    <recommendedName>
        <fullName>Molybdate/tungstate-binding protein WtpA</fullName>
    </recommendedName>
</protein>
<comment type="function">
    <text evidence="1">Part of the ABC transporter complex WtpABC involved in molybdate/tungstate import. Binds tungstate and molybdate (By similarity).</text>
</comment>
<comment type="subunit">
    <text evidence="1">The complex is composed of two ATP-binding proteins (WtpC), two transmembrane proteins (WtpB) and a solute-binding protein (WtpA).</text>
</comment>
<comment type="subcellular location">
    <subcellularLocation>
        <location evidence="3">Cell membrane</location>
        <topology evidence="1">Peripheral membrane protein</topology>
    </subcellularLocation>
</comment>
<comment type="similarity">
    <text evidence="4">Belongs to the bacterial solute-binding protein 1 family. WtpA subfamily.</text>
</comment>